<evidence type="ECO:0000250" key="1"/>
<evidence type="ECO:0000255" key="2"/>
<evidence type="ECO:0000305" key="3"/>
<feature type="chain" id="PRO_0000328403" description="Protein erg2 homolog">
    <location>
        <begin position="1"/>
        <end position="233"/>
    </location>
</feature>
<feature type="topological domain" description="Cytoplasmic" evidence="2">
    <location>
        <begin position="1"/>
        <end position="23"/>
    </location>
</feature>
<feature type="transmembrane region" description="Helical" evidence="2">
    <location>
        <begin position="24"/>
        <end position="44"/>
    </location>
</feature>
<feature type="topological domain" description="Extracellular" evidence="2">
    <location>
        <begin position="45"/>
        <end position="93"/>
    </location>
</feature>
<feature type="transmembrane region" description="Helical" evidence="2">
    <location>
        <begin position="94"/>
        <end position="114"/>
    </location>
</feature>
<feature type="topological domain" description="Cytoplasmic" evidence="2">
    <location>
        <begin position="115"/>
        <end position="233"/>
    </location>
</feature>
<sequence length="233" mass="26715">MDYFKTLEINNFNDYLNHLIQGNKVVIGTSILGLVIAIFIFIKIKLMRCIELDTKILHECTKKGVGLPIDEAFEAIHKELIKHYPQFITAKRNWLLFNGGGAMGQMCVLHASLSEYLIFYGTPLYSQGHSGRYLMDVYDFMIQGTTKQFFPGKFQSIDFPAGKFSYLPMMVAKGYCCEPNSWMLEYGRGVIPLALPYFLFSSIFVTLDIVPWISAVFYVGREVTKNLLIRRKI</sequence>
<accession>Q55BU8</accession>
<dbReference type="EMBL" id="AAFI02000005">
    <property type="protein sequence ID" value="EAL72528.1"/>
    <property type="molecule type" value="Genomic_DNA"/>
</dbReference>
<dbReference type="RefSeq" id="XP_646733.1">
    <property type="nucleotide sequence ID" value="XM_641641.1"/>
</dbReference>
<dbReference type="SMR" id="Q55BU8"/>
<dbReference type="FunCoup" id="Q55BU8">
    <property type="interactions" value="168"/>
</dbReference>
<dbReference type="STRING" id="44689.Q55BU8"/>
<dbReference type="PaxDb" id="44689-DDB0267016"/>
<dbReference type="EnsemblProtists" id="EAL72528">
    <property type="protein sequence ID" value="EAL72528"/>
    <property type="gene ID" value="DDB_G0270356"/>
</dbReference>
<dbReference type="GeneID" id="8617705"/>
<dbReference type="KEGG" id="ddi:DDB_G0270356"/>
<dbReference type="dictyBase" id="DDB_G0270356">
    <property type="gene designation" value="erg2"/>
</dbReference>
<dbReference type="VEuPathDB" id="AmoebaDB:DDB_G0270356"/>
<dbReference type="eggNOG" id="KOG4143">
    <property type="taxonomic scope" value="Eukaryota"/>
</dbReference>
<dbReference type="HOGENOM" id="CLU_085469_0_0_1"/>
<dbReference type="InParanoid" id="Q55BU8"/>
<dbReference type="OMA" id="AMYVIHA"/>
<dbReference type="PhylomeDB" id="Q55BU8"/>
<dbReference type="PRO" id="PR:Q55BU8"/>
<dbReference type="Proteomes" id="UP000002195">
    <property type="component" value="Chromosome 1"/>
</dbReference>
<dbReference type="GO" id="GO:0005783">
    <property type="term" value="C:endoplasmic reticulum"/>
    <property type="evidence" value="ECO:0000250"/>
    <property type="project" value="dictyBase"/>
</dbReference>
<dbReference type="GO" id="GO:0005789">
    <property type="term" value="C:endoplasmic reticulum membrane"/>
    <property type="evidence" value="ECO:0007669"/>
    <property type="project" value="UniProtKB-SubCell"/>
</dbReference>
<dbReference type="GO" id="GO:0005886">
    <property type="term" value="C:plasma membrane"/>
    <property type="evidence" value="ECO:0007669"/>
    <property type="project" value="UniProtKB-SubCell"/>
</dbReference>
<dbReference type="GO" id="GO:0000247">
    <property type="term" value="F:C-8 sterol isomerase activity"/>
    <property type="evidence" value="ECO:0000250"/>
    <property type="project" value="dictyBase"/>
</dbReference>
<dbReference type="GO" id="GO:0006696">
    <property type="term" value="P:ergosterol biosynthetic process"/>
    <property type="evidence" value="ECO:0000250"/>
    <property type="project" value="dictyBase"/>
</dbReference>
<dbReference type="GO" id="GO:0006869">
    <property type="term" value="P:lipid transport"/>
    <property type="evidence" value="ECO:0007669"/>
    <property type="project" value="UniProtKB-KW"/>
</dbReference>
<dbReference type="InterPro" id="IPR006716">
    <property type="entry name" value="ERG2_sigma1_rcpt-like"/>
</dbReference>
<dbReference type="PANTHER" id="PTHR10868">
    <property type="entry name" value="SIGMA 1-TYPE OPIOID RECEPTOR-RELATED"/>
    <property type="match status" value="1"/>
</dbReference>
<dbReference type="PANTHER" id="PTHR10868:SF1">
    <property type="entry name" value="SIGMA NON-OPIOID INTRACELLULAR RECEPTOR 1"/>
    <property type="match status" value="1"/>
</dbReference>
<dbReference type="Pfam" id="PF04622">
    <property type="entry name" value="ERG2_Sigma1R"/>
    <property type="match status" value="1"/>
</dbReference>
<name>ERG2_DICDI</name>
<keyword id="KW-1003">Cell membrane</keyword>
<keyword id="KW-0256">Endoplasmic reticulum</keyword>
<keyword id="KW-0445">Lipid transport</keyword>
<keyword id="KW-0472">Membrane</keyword>
<keyword id="KW-1185">Reference proteome</keyword>
<keyword id="KW-0812">Transmembrane</keyword>
<keyword id="KW-1133">Transmembrane helix</keyword>
<keyword id="KW-0813">Transport</keyword>
<organism>
    <name type="scientific">Dictyostelium discoideum</name>
    <name type="common">Social amoeba</name>
    <dbReference type="NCBI Taxonomy" id="44689"/>
    <lineage>
        <taxon>Eukaryota</taxon>
        <taxon>Amoebozoa</taxon>
        <taxon>Evosea</taxon>
        <taxon>Eumycetozoa</taxon>
        <taxon>Dictyostelia</taxon>
        <taxon>Dictyosteliales</taxon>
        <taxon>Dictyosteliaceae</taxon>
        <taxon>Dictyostelium</taxon>
    </lineage>
</organism>
<proteinExistence type="inferred from homology"/>
<comment type="function">
    <text evidence="1">May function in lipid transport from the endoplasmic reticulum and be involved in a wide array of cellular functions probably through regulation of the biogenesis of lipid microdomains at the plasma membrane. May regulate calcium efflux at the endoplasmic reticulum (By similarity).</text>
</comment>
<comment type="subcellular location">
    <subcellularLocation>
        <location evidence="1">Endoplasmic reticulum membrane</location>
    </subcellularLocation>
    <subcellularLocation>
        <location evidence="1">Cell membrane</location>
    </subcellularLocation>
</comment>
<comment type="similarity">
    <text evidence="3">Belongs to the ERG2 family.</text>
</comment>
<reference key="1">
    <citation type="journal article" date="2005" name="Nature">
        <title>The genome of the social amoeba Dictyostelium discoideum.</title>
        <authorList>
            <person name="Eichinger L."/>
            <person name="Pachebat J.A."/>
            <person name="Gloeckner G."/>
            <person name="Rajandream M.A."/>
            <person name="Sucgang R."/>
            <person name="Berriman M."/>
            <person name="Song J."/>
            <person name="Olsen R."/>
            <person name="Szafranski K."/>
            <person name="Xu Q."/>
            <person name="Tunggal B."/>
            <person name="Kummerfeld S."/>
            <person name="Madera M."/>
            <person name="Konfortov B.A."/>
            <person name="Rivero F."/>
            <person name="Bankier A.T."/>
            <person name="Lehmann R."/>
            <person name="Hamlin N."/>
            <person name="Davies R."/>
            <person name="Gaudet P."/>
            <person name="Fey P."/>
            <person name="Pilcher K."/>
            <person name="Chen G."/>
            <person name="Saunders D."/>
            <person name="Sodergren E.J."/>
            <person name="Davis P."/>
            <person name="Kerhornou A."/>
            <person name="Nie X."/>
            <person name="Hall N."/>
            <person name="Anjard C."/>
            <person name="Hemphill L."/>
            <person name="Bason N."/>
            <person name="Farbrother P."/>
            <person name="Desany B."/>
            <person name="Just E."/>
            <person name="Morio T."/>
            <person name="Rost R."/>
            <person name="Churcher C.M."/>
            <person name="Cooper J."/>
            <person name="Haydock S."/>
            <person name="van Driessche N."/>
            <person name="Cronin A."/>
            <person name="Goodhead I."/>
            <person name="Muzny D.M."/>
            <person name="Mourier T."/>
            <person name="Pain A."/>
            <person name="Lu M."/>
            <person name="Harper D."/>
            <person name="Lindsay R."/>
            <person name="Hauser H."/>
            <person name="James K.D."/>
            <person name="Quiles M."/>
            <person name="Madan Babu M."/>
            <person name="Saito T."/>
            <person name="Buchrieser C."/>
            <person name="Wardroper A."/>
            <person name="Felder M."/>
            <person name="Thangavelu M."/>
            <person name="Johnson D."/>
            <person name="Knights A."/>
            <person name="Loulseged H."/>
            <person name="Mungall K.L."/>
            <person name="Oliver K."/>
            <person name="Price C."/>
            <person name="Quail M.A."/>
            <person name="Urushihara H."/>
            <person name="Hernandez J."/>
            <person name="Rabbinowitsch E."/>
            <person name="Steffen D."/>
            <person name="Sanders M."/>
            <person name="Ma J."/>
            <person name="Kohara Y."/>
            <person name="Sharp S."/>
            <person name="Simmonds M.N."/>
            <person name="Spiegler S."/>
            <person name="Tivey A."/>
            <person name="Sugano S."/>
            <person name="White B."/>
            <person name="Walker D."/>
            <person name="Woodward J.R."/>
            <person name="Winckler T."/>
            <person name="Tanaka Y."/>
            <person name="Shaulsky G."/>
            <person name="Schleicher M."/>
            <person name="Weinstock G.M."/>
            <person name="Rosenthal A."/>
            <person name="Cox E.C."/>
            <person name="Chisholm R.L."/>
            <person name="Gibbs R.A."/>
            <person name="Loomis W.F."/>
            <person name="Platzer M."/>
            <person name="Kay R.R."/>
            <person name="Williams J.G."/>
            <person name="Dear P.H."/>
            <person name="Noegel A.A."/>
            <person name="Barrell B.G."/>
            <person name="Kuspa A."/>
        </authorList>
    </citation>
    <scope>NUCLEOTIDE SEQUENCE [LARGE SCALE GENOMIC DNA]</scope>
    <source>
        <strain>AX4</strain>
    </source>
</reference>
<gene>
    <name type="primary">erg2</name>
    <name type="ORF">DDB_G0270356</name>
</gene>
<protein>
    <recommendedName>
        <fullName>Protein erg2 homolog</fullName>
    </recommendedName>
</protein>